<sequence>MAIDRAQNLQDTFLNHVRKTKTPLTIFLVNGVKLQGIVTWFDNFCLLLRRDGHSQLVYKHAISTIMPGAPIQLFEGGEDAPL</sequence>
<gene>
    <name evidence="1" type="primary">hfq</name>
    <name type="ordered locus">Nwi_1449</name>
</gene>
<protein>
    <recommendedName>
        <fullName evidence="1">RNA-binding protein Hfq</fullName>
    </recommendedName>
</protein>
<comment type="function">
    <text evidence="1">RNA chaperone that binds small regulatory RNA (sRNAs) and mRNAs to facilitate mRNA translational regulation in response to envelope stress, environmental stress and changes in metabolite concentrations. Also binds with high specificity to tRNAs.</text>
</comment>
<comment type="subunit">
    <text evidence="1">Homohexamer.</text>
</comment>
<comment type="similarity">
    <text evidence="1">Belongs to the Hfq family.</text>
</comment>
<keyword id="KW-1185">Reference proteome</keyword>
<keyword id="KW-0694">RNA-binding</keyword>
<keyword id="KW-0346">Stress response</keyword>
<name>HFQ_NITWN</name>
<organism>
    <name type="scientific">Nitrobacter winogradskyi (strain ATCC 25391 / DSM 10237 / CIP 104748 / NCIMB 11846 / Nb-255)</name>
    <dbReference type="NCBI Taxonomy" id="323098"/>
    <lineage>
        <taxon>Bacteria</taxon>
        <taxon>Pseudomonadati</taxon>
        <taxon>Pseudomonadota</taxon>
        <taxon>Alphaproteobacteria</taxon>
        <taxon>Hyphomicrobiales</taxon>
        <taxon>Nitrobacteraceae</taxon>
        <taxon>Nitrobacter</taxon>
    </lineage>
</organism>
<evidence type="ECO:0000255" key="1">
    <source>
        <dbReference type="HAMAP-Rule" id="MF_00436"/>
    </source>
</evidence>
<evidence type="ECO:0000255" key="2">
    <source>
        <dbReference type="PROSITE-ProRule" id="PRU01346"/>
    </source>
</evidence>
<reference key="1">
    <citation type="journal article" date="2006" name="Appl. Environ. Microbiol.">
        <title>Genome sequence of the chemolithoautotrophic nitrite-oxidizing bacterium Nitrobacter winogradskyi Nb-255.</title>
        <authorList>
            <person name="Starkenburg S.R."/>
            <person name="Chain P.S.G."/>
            <person name="Sayavedra-Soto L.A."/>
            <person name="Hauser L."/>
            <person name="Land M.L."/>
            <person name="Larimer F.W."/>
            <person name="Malfatti S.A."/>
            <person name="Klotz M.G."/>
            <person name="Bottomley P.J."/>
            <person name="Arp D.J."/>
            <person name="Hickey W.J."/>
        </authorList>
    </citation>
    <scope>NUCLEOTIDE SEQUENCE [LARGE SCALE GENOMIC DNA]</scope>
    <source>
        <strain>ATCC 25391 / DSM 10237 / CIP 104748 / NCIMB 11846 / Nb-255</strain>
    </source>
</reference>
<proteinExistence type="inferred from homology"/>
<accession>Q3SSN1</accession>
<dbReference type="EMBL" id="CP000115">
    <property type="protein sequence ID" value="ABA04710.1"/>
    <property type="molecule type" value="Genomic_DNA"/>
</dbReference>
<dbReference type="RefSeq" id="WP_009797508.1">
    <property type="nucleotide sequence ID" value="NC_007406.1"/>
</dbReference>
<dbReference type="SMR" id="Q3SSN1"/>
<dbReference type="STRING" id="323098.Nwi_1449"/>
<dbReference type="KEGG" id="nwi:Nwi_1449"/>
<dbReference type="eggNOG" id="COG1923">
    <property type="taxonomic scope" value="Bacteria"/>
</dbReference>
<dbReference type="HOGENOM" id="CLU_113688_0_0_5"/>
<dbReference type="OrthoDB" id="9799751at2"/>
<dbReference type="Proteomes" id="UP000002531">
    <property type="component" value="Chromosome"/>
</dbReference>
<dbReference type="GO" id="GO:0005829">
    <property type="term" value="C:cytosol"/>
    <property type="evidence" value="ECO:0007669"/>
    <property type="project" value="TreeGrafter"/>
</dbReference>
<dbReference type="GO" id="GO:0003723">
    <property type="term" value="F:RNA binding"/>
    <property type="evidence" value="ECO:0007669"/>
    <property type="project" value="UniProtKB-UniRule"/>
</dbReference>
<dbReference type="GO" id="GO:0006355">
    <property type="term" value="P:regulation of DNA-templated transcription"/>
    <property type="evidence" value="ECO:0007669"/>
    <property type="project" value="InterPro"/>
</dbReference>
<dbReference type="GO" id="GO:0043487">
    <property type="term" value="P:regulation of RNA stability"/>
    <property type="evidence" value="ECO:0007669"/>
    <property type="project" value="TreeGrafter"/>
</dbReference>
<dbReference type="GO" id="GO:0045974">
    <property type="term" value="P:regulation of translation, ncRNA-mediated"/>
    <property type="evidence" value="ECO:0007669"/>
    <property type="project" value="TreeGrafter"/>
</dbReference>
<dbReference type="CDD" id="cd01716">
    <property type="entry name" value="Hfq"/>
    <property type="match status" value="1"/>
</dbReference>
<dbReference type="FunFam" id="2.30.30.100:FF:000001">
    <property type="entry name" value="RNA-binding protein Hfq"/>
    <property type="match status" value="1"/>
</dbReference>
<dbReference type="Gene3D" id="2.30.30.100">
    <property type="match status" value="1"/>
</dbReference>
<dbReference type="HAMAP" id="MF_00436">
    <property type="entry name" value="Hfq"/>
    <property type="match status" value="1"/>
</dbReference>
<dbReference type="InterPro" id="IPR005001">
    <property type="entry name" value="Hfq"/>
</dbReference>
<dbReference type="InterPro" id="IPR010920">
    <property type="entry name" value="LSM_dom_sf"/>
</dbReference>
<dbReference type="InterPro" id="IPR047575">
    <property type="entry name" value="Sm"/>
</dbReference>
<dbReference type="NCBIfam" id="TIGR02383">
    <property type="entry name" value="Hfq"/>
    <property type="match status" value="1"/>
</dbReference>
<dbReference type="NCBIfam" id="NF001602">
    <property type="entry name" value="PRK00395.1"/>
    <property type="match status" value="1"/>
</dbReference>
<dbReference type="PANTHER" id="PTHR34772">
    <property type="entry name" value="RNA-BINDING PROTEIN HFQ"/>
    <property type="match status" value="1"/>
</dbReference>
<dbReference type="PANTHER" id="PTHR34772:SF1">
    <property type="entry name" value="RNA-BINDING PROTEIN HFQ"/>
    <property type="match status" value="1"/>
</dbReference>
<dbReference type="Pfam" id="PF17209">
    <property type="entry name" value="Hfq"/>
    <property type="match status" value="1"/>
</dbReference>
<dbReference type="SUPFAM" id="SSF50182">
    <property type="entry name" value="Sm-like ribonucleoproteins"/>
    <property type="match status" value="1"/>
</dbReference>
<dbReference type="PROSITE" id="PS52002">
    <property type="entry name" value="SM"/>
    <property type="match status" value="1"/>
</dbReference>
<feature type="chain" id="PRO_1000080673" description="RNA-binding protein Hfq">
    <location>
        <begin position="1"/>
        <end position="82"/>
    </location>
</feature>
<feature type="domain" description="Sm" evidence="2">
    <location>
        <begin position="11"/>
        <end position="71"/>
    </location>
</feature>